<proteinExistence type="inferred from homology"/>
<dbReference type="EC" id="5.1.1.3" evidence="1"/>
<dbReference type="EMBL" id="AE003852">
    <property type="protein sequence ID" value="AAF93334.1"/>
    <property type="molecule type" value="Genomic_DNA"/>
</dbReference>
<dbReference type="PIR" id="C82358">
    <property type="entry name" value="C82358"/>
</dbReference>
<dbReference type="RefSeq" id="NP_229815.1">
    <property type="nucleotide sequence ID" value="NC_002505.1"/>
</dbReference>
<dbReference type="RefSeq" id="WP_000098149.1">
    <property type="nucleotide sequence ID" value="NZ_LT906614.1"/>
</dbReference>
<dbReference type="SMR" id="Q9KVI7"/>
<dbReference type="STRING" id="243277.VC_0158"/>
<dbReference type="DNASU" id="2614887"/>
<dbReference type="EnsemblBacteria" id="AAF93334">
    <property type="protein sequence ID" value="AAF93334"/>
    <property type="gene ID" value="VC_0158"/>
</dbReference>
<dbReference type="KEGG" id="vch:VC_0158"/>
<dbReference type="PATRIC" id="fig|243277.26.peg.145"/>
<dbReference type="eggNOG" id="COG0796">
    <property type="taxonomic scope" value="Bacteria"/>
</dbReference>
<dbReference type="HOGENOM" id="CLU_052344_2_0_6"/>
<dbReference type="UniPathway" id="UPA00219"/>
<dbReference type="Proteomes" id="UP000000584">
    <property type="component" value="Chromosome 1"/>
</dbReference>
<dbReference type="GO" id="GO:0008881">
    <property type="term" value="F:glutamate racemase activity"/>
    <property type="evidence" value="ECO:0000318"/>
    <property type="project" value="GO_Central"/>
</dbReference>
<dbReference type="GO" id="GO:0071555">
    <property type="term" value="P:cell wall organization"/>
    <property type="evidence" value="ECO:0007669"/>
    <property type="project" value="UniProtKB-KW"/>
</dbReference>
<dbReference type="GO" id="GO:0009252">
    <property type="term" value="P:peptidoglycan biosynthetic process"/>
    <property type="evidence" value="ECO:0000318"/>
    <property type="project" value="GO_Central"/>
</dbReference>
<dbReference type="GO" id="GO:0008360">
    <property type="term" value="P:regulation of cell shape"/>
    <property type="evidence" value="ECO:0007669"/>
    <property type="project" value="UniProtKB-KW"/>
</dbReference>
<dbReference type="FunFam" id="3.40.50.1860:FF:000001">
    <property type="entry name" value="Glutamate racemase"/>
    <property type="match status" value="1"/>
</dbReference>
<dbReference type="Gene3D" id="3.40.50.1860">
    <property type="match status" value="2"/>
</dbReference>
<dbReference type="HAMAP" id="MF_00258">
    <property type="entry name" value="Glu_racemase"/>
    <property type="match status" value="1"/>
</dbReference>
<dbReference type="InterPro" id="IPR015942">
    <property type="entry name" value="Asp/Glu/hydantoin_racemase"/>
</dbReference>
<dbReference type="InterPro" id="IPR001920">
    <property type="entry name" value="Asp/Glu_race"/>
</dbReference>
<dbReference type="InterPro" id="IPR018187">
    <property type="entry name" value="Asp/Glu_racemase_AS_1"/>
</dbReference>
<dbReference type="InterPro" id="IPR004391">
    <property type="entry name" value="Glu_race"/>
</dbReference>
<dbReference type="NCBIfam" id="TIGR00067">
    <property type="entry name" value="glut_race"/>
    <property type="match status" value="1"/>
</dbReference>
<dbReference type="PANTHER" id="PTHR21198">
    <property type="entry name" value="GLUTAMATE RACEMASE"/>
    <property type="match status" value="1"/>
</dbReference>
<dbReference type="PANTHER" id="PTHR21198:SF2">
    <property type="entry name" value="GLUTAMATE RACEMASE"/>
    <property type="match status" value="1"/>
</dbReference>
<dbReference type="Pfam" id="PF01177">
    <property type="entry name" value="Asp_Glu_race"/>
    <property type="match status" value="1"/>
</dbReference>
<dbReference type="SUPFAM" id="SSF53681">
    <property type="entry name" value="Aspartate/glutamate racemase"/>
    <property type="match status" value="2"/>
</dbReference>
<dbReference type="PROSITE" id="PS00923">
    <property type="entry name" value="ASP_GLU_RACEMASE_1"/>
    <property type="match status" value="1"/>
</dbReference>
<keyword id="KW-0133">Cell shape</keyword>
<keyword id="KW-0961">Cell wall biogenesis/degradation</keyword>
<keyword id="KW-0413">Isomerase</keyword>
<keyword id="KW-0573">Peptidoglycan synthesis</keyword>
<keyword id="KW-1185">Reference proteome</keyword>
<protein>
    <recommendedName>
        <fullName evidence="1">Glutamate racemase</fullName>
        <ecNumber evidence="1">5.1.1.3</ecNumber>
    </recommendedName>
</protein>
<accession>Q9KVI7</accession>
<gene>
    <name evidence="1" type="primary">murI</name>
    <name type="ordered locus">VC_0158</name>
</gene>
<reference key="1">
    <citation type="journal article" date="2000" name="Nature">
        <title>DNA sequence of both chromosomes of the cholera pathogen Vibrio cholerae.</title>
        <authorList>
            <person name="Heidelberg J.F."/>
            <person name="Eisen J.A."/>
            <person name="Nelson W.C."/>
            <person name="Clayton R.A."/>
            <person name="Gwinn M.L."/>
            <person name="Dodson R.J."/>
            <person name="Haft D.H."/>
            <person name="Hickey E.K."/>
            <person name="Peterson J.D."/>
            <person name="Umayam L.A."/>
            <person name="Gill S.R."/>
            <person name="Nelson K.E."/>
            <person name="Read T.D."/>
            <person name="Tettelin H."/>
            <person name="Richardson D.L."/>
            <person name="Ermolaeva M.D."/>
            <person name="Vamathevan J.J."/>
            <person name="Bass S."/>
            <person name="Qin H."/>
            <person name="Dragoi I."/>
            <person name="Sellers P."/>
            <person name="McDonald L.A."/>
            <person name="Utterback T.R."/>
            <person name="Fleischmann R.D."/>
            <person name="Nierman W.C."/>
            <person name="White O."/>
            <person name="Salzberg S.L."/>
            <person name="Smith H.O."/>
            <person name="Colwell R.R."/>
            <person name="Mekalanos J.J."/>
            <person name="Venter J.C."/>
            <person name="Fraser C.M."/>
        </authorList>
    </citation>
    <scope>NUCLEOTIDE SEQUENCE [LARGE SCALE GENOMIC DNA]</scope>
    <source>
        <strain>ATCC 39315 / El Tor Inaba N16961</strain>
    </source>
</reference>
<feature type="chain" id="PRO_0000095530" description="Glutamate racemase">
    <location>
        <begin position="1"/>
        <end position="265"/>
    </location>
</feature>
<feature type="active site" description="Proton donor/acceptor" evidence="1">
    <location>
        <position position="77"/>
    </location>
</feature>
<feature type="active site" description="Proton donor/acceptor" evidence="1">
    <location>
        <position position="185"/>
    </location>
</feature>
<feature type="binding site" evidence="1">
    <location>
        <begin position="13"/>
        <end position="14"/>
    </location>
    <ligand>
        <name>substrate</name>
    </ligand>
</feature>
<feature type="binding site" evidence="1">
    <location>
        <begin position="45"/>
        <end position="46"/>
    </location>
    <ligand>
        <name>substrate</name>
    </ligand>
</feature>
<feature type="binding site" evidence="1">
    <location>
        <begin position="78"/>
        <end position="79"/>
    </location>
    <ligand>
        <name>substrate</name>
    </ligand>
</feature>
<feature type="binding site" evidence="1">
    <location>
        <begin position="186"/>
        <end position="187"/>
    </location>
    <ligand>
        <name>substrate</name>
    </ligand>
</feature>
<evidence type="ECO:0000255" key="1">
    <source>
        <dbReference type="HAMAP-Rule" id="MF_00258"/>
    </source>
</evidence>
<organism>
    <name type="scientific">Vibrio cholerae serotype O1 (strain ATCC 39315 / El Tor Inaba N16961)</name>
    <dbReference type="NCBI Taxonomy" id="243277"/>
    <lineage>
        <taxon>Bacteria</taxon>
        <taxon>Pseudomonadati</taxon>
        <taxon>Pseudomonadota</taxon>
        <taxon>Gammaproteobacteria</taxon>
        <taxon>Vibrionales</taxon>
        <taxon>Vibrionaceae</taxon>
        <taxon>Vibrio</taxon>
    </lineage>
</organism>
<comment type="function">
    <text evidence="1">Provides the (R)-glutamate required for cell wall biosynthesis.</text>
</comment>
<comment type="catalytic activity">
    <reaction evidence="1">
        <text>L-glutamate = D-glutamate</text>
        <dbReference type="Rhea" id="RHEA:12813"/>
        <dbReference type="ChEBI" id="CHEBI:29985"/>
        <dbReference type="ChEBI" id="CHEBI:29986"/>
        <dbReference type="EC" id="5.1.1.3"/>
    </reaction>
</comment>
<comment type="pathway">
    <text evidence="1">Cell wall biogenesis; peptidoglycan biosynthesis.</text>
</comment>
<comment type="similarity">
    <text evidence="1">Belongs to the aspartate/glutamate racemases family.</text>
</comment>
<name>MURI_VIBCH</name>
<sequence length="265" mass="29196">MSSPSFPRVLIFDSGVGGLSVYREIEARLPQLNYIYLFDNAAYPYGELTQETLIARVDTLVTRMVEQERIDLVVIACNTASTIVLPVLRAKLTIPVVGVVPAIKPASLIASKAIGLIATPATVKRQYTQELIRDFSANKNVELLGSTRLVNMAEEKLRGKPLDLEELASILQPLKNTIDVAVLGCTHFPLIKEEIQQVLGEQVQLIDSGLAIARRVQELLGIEQAVGAKQKHRIYASAPPWEESALNIKLEQLGFNPVQPFLHPI</sequence>